<dbReference type="EC" id="2.6.99.2" evidence="1"/>
<dbReference type="EMBL" id="AE001439">
    <property type="protein sequence ID" value="AAD07063.1"/>
    <property type="molecule type" value="Genomic_DNA"/>
</dbReference>
<dbReference type="PIR" id="C71801">
    <property type="entry name" value="C71801"/>
</dbReference>
<dbReference type="RefSeq" id="WP_001210881.1">
    <property type="nucleotide sequence ID" value="NC_000921.1"/>
</dbReference>
<dbReference type="SMR" id="Q9ZJ29"/>
<dbReference type="KEGG" id="hpj:jhp_1489"/>
<dbReference type="PATRIC" id="fig|85963.30.peg.1052"/>
<dbReference type="eggNOG" id="COG0854">
    <property type="taxonomic scope" value="Bacteria"/>
</dbReference>
<dbReference type="UniPathway" id="UPA00244">
    <property type="reaction ID" value="UER00313"/>
</dbReference>
<dbReference type="Proteomes" id="UP000000804">
    <property type="component" value="Chromosome"/>
</dbReference>
<dbReference type="GO" id="GO:0005829">
    <property type="term" value="C:cytosol"/>
    <property type="evidence" value="ECO:0007669"/>
    <property type="project" value="TreeGrafter"/>
</dbReference>
<dbReference type="GO" id="GO:0033856">
    <property type="term" value="F:pyridoxine 5'-phosphate synthase activity"/>
    <property type="evidence" value="ECO:0007669"/>
    <property type="project" value="UniProtKB-EC"/>
</dbReference>
<dbReference type="GO" id="GO:0008615">
    <property type="term" value="P:pyridoxine biosynthetic process"/>
    <property type="evidence" value="ECO:0007669"/>
    <property type="project" value="UniProtKB-UniRule"/>
</dbReference>
<dbReference type="CDD" id="cd00003">
    <property type="entry name" value="PNPsynthase"/>
    <property type="match status" value="1"/>
</dbReference>
<dbReference type="FunFam" id="3.20.20.70:FF:000264">
    <property type="entry name" value="Pyridoxine 5'-phosphate synthase"/>
    <property type="match status" value="1"/>
</dbReference>
<dbReference type="Gene3D" id="3.20.20.70">
    <property type="entry name" value="Aldolase class I"/>
    <property type="match status" value="1"/>
</dbReference>
<dbReference type="HAMAP" id="MF_00279">
    <property type="entry name" value="PdxJ"/>
    <property type="match status" value="1"/>
</dbReference>
<dbReference type="InterPro" id="IPR013785">
    <property type="entry name" value="Aldolase_TIM"/>
</dbReference>
<dbReference type="InterPro" id="IPR004569">
    <property type="entry name" value="PyrdxlP_synth_PdxJ"/>
</dbReference>
<dbReference type="InterPro" id="IPR036130">
    <property type="entry name" value="Pyridoxine-5'_phos_synth"/>
</dbReference>
<dbReference type="NCBIfam" id="TIGR00559">
    <property type="entry name" value="pdxJ"/>
    <property type="match status" value="1"/>
</dbReference>
<dbReference type="NCBIfam" id="NF003625">
    <property type="entry name" value="PRK05265.1-3"/>
    <property type="match status" value="1"/>
</dbReference>
<dbReference type="NCBIfam" id="NF003627">
    <property type="entry name" value="PRK05265.1-5"/>
    <property type="match status" value="1"/>
</dbReference>
<dbReference type="PANTHER" id="PTHR30456">
    <property type="entry name" value="PYRIDOXINE 5'-PHOSPHATE SYNTHASE"/>
    <property type="match status" value="1"/>
</dbReference>
<dbReference type="PANTHER" id="PTHR30456:SF0">
    <property type="entry name" value="PYRIDOXINE 5'-PHOSPHATE SYNTHASE"/>
    <property type="match status" value="1"/>
</dbReference>
<dbReference type="Pfam" id="PF03740">
    <property type="entry name" value="PdxJ"/>
    <property type="match status" value="1"/>
</dbReference>
<dbReference type="SUPFAM" id="SSF63892">
    <property type="entry name" value="Pyridoxine 5'-phosphate synthase"/>
    <property type="match status" value="1"/>
</dbReference>
<gene>
    <name evidence="1" type="primary">pdxJ</name>
    <name type="ordered locus">jhp_1489</name>
</gene>
<protein>
    <recommendedName>
        <fullName evidence="1">Pyridoxine 5'-phosphate synthase</fullName>
        <shortName evidence="1">PNP synthase</shortName>
        <ecNumber evidence="1">2.6.99.2</ecNumber>
    </recommendedName>
</protein>
<reference key="1">
    <citation type="journal article" date="1999" name="Nature">
        <title>Genomic sequence comparison of two unrelated isolates of the human gastric pathogen Helicobacter pylori.</title>
        <authorList>
            <person name="Alm R.A."/>
            <person name="Ling L.-S.L."/>
            <person name="Moir D.T."/>
            <person name="King B.L."/>
            <person name="Brown E.D."/>
            <person name="Doig P.C."/>
            <person name="Smith D.R."/>
            <person name="Noonan B."/>
            <person name="Guild B.C."/>
            <person name="deJonge B.L."/>
            <person name="Carmel G."/>
            <person name="Tummino P.J."/>
            <person name="Caruso A."/>
            <person name="Uria-Nickelsen M."/>
            <person name="Mills D.M."/>
            <person name="Ives C."/>
            <person name="Gibson R."/>
            <person name="Merberg D."/>
            <person name="Mills S.D."/>
            <person name="Jiang Q."/>
            <person name="Taylor D.E."/>
            <person name="Vovis G.F."/>
            <person name="Trust T.J."/>
        </authorList>
    </citation>
    <scope>NUCLEOTIDE SEQUENCE [LARGE SCALE GENOMIC DNA]</scope>
    <source>
        <strain>J99 / ATCC 700824</strain>
    </source>
</reference>
<sequence length="262" mass="29767">MRFGLNIDHIVTLREVRKTYEPEILEALFIAKNTHKVDLITIHLREDKRHIQNEDVLRLLEISPLPINIECSINAEITDFLCSLKNKPSKVTIVPENRNEVTTEGGLDCSLKGLEEVIRAYHNKGIEVSLFVDPLKDALHFAKEHQVKQVEFHTGVYANLHNALYSNANNQIHAISTLKDKCPKELKEELHNAFLQLRRMSKEAFFMGIVVCAGHGLNYSNVKELLKIPSLRELNIGHSVVSKAVLVGLEKAILEMAQLIKR</sequence>
<comment type="function">
    <text evidence="1">Catalyzes the complicated ring closure reaction between the two acyclic compounds 1-deoxy-D-xylulose-5-phosphate (DXP) and 3-amino-2-oxopropyl phosphate (1-amino-acetone-3-phosphate or AAP) to form pyridoxine 5'-phosphate (PNP) and inorganic phosphate.</text>
</comment>
<comment type="catalytic activity">
    <reaction evidence="1">
        <text>3-amino-2-oxopropyl phosphate + 1-deoxy-D-xylulose 5-phosphate = pyridoxine 5'-phosphate + phosphate + 2 H2O + H(+)</text>
        <dbReference type="Rhea" id="RHEA:15265"/>
        <dbReference type="ChEBI" id="CHEBI:15377"/>
        <dbReference type="ChEBI" id="CHEBI:15378"/>
        <dbReference type="ChEBI" id="CHEBI:43474"/>
        <dbReference type="ChEBI" id="CHEBI:57279"/>
        <dbReference type="ChEBI" id="CHEBI:57792"/>
        <dbReference type="ChEBI" id="CHEBI:58589"/>
        <dbReference type="EC" id="2.6.99.2"/>
    </reaction>
</comment>
<comment type="pathway">
    <text evidence="1">Cofactor biosynthesis; pyridoxine 5'-phosphate biosynthesis; pyridoxine 5'-phosphate from D-erythrose 4-phosphate: step 5/5.</text>
</comment>
<comment type="subunit">
    <text evidence="1">Homooctamer; tetramer of dimers.</text>
</comment>
<comment type="subcellular location">
    <subcellularLocation>
        <location evidence="1">Cytoplasm</location>
    </subcellularLocation>
</comment>
<comment type="similarity">
    <text evidence="1">Belongs to the PNP synthase family.</text>
</comment>
<keyword id="KW-0963">Cytoplasm</keyword>
<keyword id="KW-0664">Pyridoxine biosynthesis</keyword>
<keyword id="KW-0808">Transferase</keyword>
<feature type="chain" id="PRO_0000190118" description="Pyridoxine 5'-phosphate synthase">
    <location>
        <begin position="1"/>
        <end position="262"/>
    </location>
</feature>
<feature type="active site" description="Proton acceptor" evidence="1">
    <location>
        <position position="43"/>
    </location>
</feature>
<feature type="active site" description="Proton acceptor" evidence="1">
    <location>
        <position position="70"/>
    </location>
</feature>
<feature type="active site" description="Proton donor" evidence="1">
    <location>
        <position position="215"/>
    </location>
</feature>
<feature type="binding site" evidence="1">
    <location>
        <position position="6"/>
    </location>
    <ligand>
        <name>3-amino-2-oxopropyl phosphate</name>
        <dbReference type="ChEBI" id="CHEBI:57279"/>
    </ligand>
</feature>
<feature type="binding site" evidence="1">
    <location>
        <begin position="8"/>
        <end position="9"/>
    </location>
    <ligand>
        <name>1-deoxy-D-xylulose 5-phosphate</name>
        <dbReference type="ChEBI" id="CHEBI:57792"/>
    </ligand>
</feature>
<feature type="binding site" evidence="1">
    <location>
        <position position="17"/>
    </location>
    <ligand>
        <name>3-amino-2-oxopropyl phosphate</name>
        <dbReference type="ChEBI" id="CHEBI:57279"/>
    </ligand>
</feature>
<feature type="binding site" evidence="1">
    <location>
        <position position="45"/>
    </location>
    <ligand>
        <name>1-deoxy-D-xylulose 5-phosphate</name>
        <dbReference type="ChEBI" id="CHEBI:57792"/>
    </ligand>
</feature>
<feature type="binding site" evidence="1">
    <location>
        <position position="50"/>
    </location>
    <ligand>
        <name>1-deoxy-D-xylulose 5-phosphate</name>
        <dbReference type="ChEBI" id="CHEBI:57792"/>
    </ligand>
</feature>
<feature type="binding site" evidence="1">
    <location>
        <position position="102"/>
    </location>
    <ligand>
        <name>1-deoxy-D-xylulose 5-phosphate</name>
        <dbReference type="ChEBI" id="CHEBI:57792"/>
    </ligand>
</feature>
<feature type="binding site" evidence="1">
    <location>
        <position position="216"/>
    </location>
    <ligand>
        <name>3-amino-2-oxopropyl phosphate</name>
        <dbReference type="ChEBI" id="CHEBI:57279"/>
    </ligand>
</feature>
<feature type="binding site" evidence="1">
    <location>
        <begin position="237"/>
        <end position="238"/>
    </location>
    <ligand>
        <name>3-amino-2-oxopropyl phosphate</name>
        <dbReference type="ChEBI" id="CHEBI:57279"/>
    </ligand>
</feature>
<feature type="site" description="Transition state stabilizer" evidence="1">
    <location>
        <position position="151"/>
    </location>
</feature>
<proteinExistence type="inferred from homology"/>
<organism>
    <name type="scientific">Helicobacter pylori (strain J99 / ATCC 700824)</name>
    <name type="common">Campylobacter pylori J99</name>
    <dbReference type="NCBI Taxonomy" id="85963"/>
    <lineage>
        <taxon>Bacteria</taxon>
        <taxon>Pseudomonadati</taxon>
        <taxon>Campylobacterota</taxon>
        <taxon>Epsilonproteobacteria</taxon>
        <taxon>Campylobacterales</taxon>
        <taxon>Helicobacteraceae</taxon>
        <taxon>Helicobacter</taxon>
    </lineage>
</organism>
<name>PDXJ_HELPJ</name>
<evidence type="ECO:0000255" key="1">
    <source>
        <dbReference type="HAMAP-Rule" id="MF_00279"/>
    </source>
</evidence>
<accession>Q9ZJ29</accession>